<organism>
    <name type="scientific">Nitrobacter hamburgensis (strain DSM 10229 / NCIMB 13809 / X14)</name>
    <dbReference type="NCBI Taxonomy" id="323097"/>
    <lineage>
        <taxon>Bacteria</taxon>
        <taxon>Pseudomonadati</taxon>
        <taxon>Pseudomonadota</taxon>
        <taxon>Alphaproteobacteria</taxon>
        <taxon>Hyphomicrobiales</taxon>
        <taxon>Nitrobacteraceae</taxon>
        <taxon>Nitrobacter</taxon>
    </lineage>
</organism>
<evidence type="ECO:0000255" key="1">
    <source>
        <dbReference type="HAMAP-Rule" id="MF_01220"/>
    </source>
</evidence>
<accession>Q1QMN5</accession>
<dbReference type="EC" id="2.7.4.22" evidence="1"/>
<dbReference type="EMBL" id="CP000319">
    <property type="protein sequence ID" value="ABE62512.1"/>
    <property type="molecule type" value="Genomic_DNA"/>
</dbReference>
<dbReference type="RefSeq" id="WP_011510194.1">
    <property type="nucleotide sequence ID" value="NC_007964.1"/>
</dbReference>
<dbReference type="SMR" id="Q1QMN5"/>
<dbReference type="STRING" id="323097.Nham_1696"/>
<dbReference type="KEGG" id="nha:Nham_1696"/>
<dbReference type="eggNOG" id="COG0528">
    <property type="taxonomic scope" value="Bacteria"/>
</dbReference>
<dbReference type="HOGENOM" id="CLU_033861_0_0_5"/>
<dbReference type="OrthoDB" id="9807458at2"/>
<dbReference type="UniPathway" id="UPA00159">
    <property type="reaction ID" value="UER00275"/>
</dbReference>
<dbReference type="Proteomes" id="UP000001953">
    <property type="component" value="Chromosome"/>
</dbReference>
<dbReference type="GO" id="GO:0005829">
    <property type="term" value="C:cytosol"/>
    <property type="evidence" value="ECO:0007669"/>
    <property type="project" value="TreeGrafter"/>
</dbReference>
<dbReference type="GO" id="GO:0005524">
    <property type="term" value="F:ATP binding"/>
    <property type="evidence" value="ECO:0007669"/>
    <property type="project" value="UniProtKB-KW"/>
</dbReference>
<dbReference type="GO" id="GO:0033862">
    <property type="term" value="F:UMP kinase activity"/>
    <property type="evidence" value="ECO:0007669"/>
    <property type="project" value="UniProtKB-EC"/>
</dbReference>
<dbReference type="GO" id="GO:0044210">
    <property type="term" value="P:'de novo' CTP biosynthetic process"/>
    <property type="evidence" value="ECO:0007669"/>
    <property type="project" value="UniProtKB-UniRule"/>
</dbReference>
<dbReference type="GO" id="GO:0006225">
    <property type="term" value="P:UDP biosynthetic process"/>
    <property type="evidence" value="ECO:0007669"/>
    <property type="project" value="TreeGrafter"/>
</dbReference>
<dbReference type="CDD" id="cd04254">
    <property type="entry name" value="AAK_UMPK-PyrH-Ec"/>
    <property type="match status" value="1"/>
</dbReference>
<dbReference type="FunFam" id="3.40.1160.10:FF:000001">
    <property type="entry name" value="Uridylate kinase"/>
    <property type="match status" value="1"/>
</dbReference>
<dbReference type="Gene3D" id="3.40.1160.10">
    <property type="entry name" value="Acetylglutamate kinase-like"/>
    <property type="match status" value="1"/>
</dbReference>
<dbReference type="HAMAP" id="MF_01220_B">
    <property type="entry name" value="PyrH_B"/>
    <property type="match status" value="1"/>
</dbReference>
<dbReference type="InterPro" id="IPR036393">
    <property type="entry name" value="AceGlu_kinase-like_sf"/>
</dbReference>
<dbReference type="InterPro" id="IPR001048">
    <property type="entry name" value="Asp/Glu/Uridylate_kinase"/>
</dbReference>
<dbReference type="InterPro" id="IPR011817">
    <property type="entry name" value="Uridylate_kinase"/>
</dbReference>
<dbReference type="InterPro" id="IPR015963">
    <property type="entry name" value="Uridylate_kinase_bac"/>
</dbReference>
<dbReference type="NCBIfam" id="TIGR02075">
    <property type="entry name" value="pyrH_bact"/>
    <property type="match status" value="1"/>
</dbReference>
<dbReference type="PANTHER" id="PTHR42833">
    <property type="entry name" value="URIDYLATE KINASE"/>
    <property type="match status" value="1"/>
</dbReference>
<dbReference type="PANTHER" id="PTHR42833:SF4">
    <property type="entry name" value="URIDYLATE KINASE PUMPKIN, CHLOROPLASTIC"/>
    <property type="match status" value="1"/>
</dbReference>
<dbReference type="Pfam" id="PF00696">
    <property type="entry name" value="AA_kinase"/>
    <property type="match status" value="1"/>
</dbReference>
<dbReference type="PIRSF" id="PIRSF005650">
    <property type="entry name" value="Uridylate_kin"/>
    <property type="match status" value="1"/>
</dbReference>
<dbReference type="SUPFAM" id="SSF53633">
    <property type="entry name" value="Carbamate kinase-like"/>
    <property type="match status" value="1"/>
</dbReference>
<gene>
    <name evidence="1" type="primary">pyrH</name>
    <name type="ordered locus">Nham_1696</name>
</gene>
<protein>
    <recommendedName>
        <fullName evidence="1">Uridylate kinase</fullName>
        <shortName evidence="1">UK</shortName>
        <ecNumber evidence="1">2.7.4.22</ecNumber>
    </recommendedName>
    <alternativeName>
        <fullName evidence="1">Uridine monophosphate kinase</fullName>
        <shortName evidence="1">UMP kinase</shortName>
        <shortName evidence="1">UMPK</shortName>
    </alternativeName>
</protein>
<reference key="1">
    <citation type="submission" date="2006-03" db="EMBL/GenBank/DDBJ databases">
        <title>Complete sequence of chromosome of Nitrobacter hamburgensis X14.</title>
        <authorList>
            <consortium name="US DOE Joint Genome Institute"/>
            <person name="Copeland A."/>
            <person name="Lucas S."/>
            <person name="Lapidus A."/>
            <person name="Barry K."/>
            <person name="Detter J.C."/>
            <person name="Glavina del Rio T."/>
            <person name="Hammon N."/>
            <person name="Israni S."/>
            <person name="Dalin E."/>
            <person name="Tice H."/>
            <person name="Pitluck S."/>
            <person name="Chain P."/>
            <person name="Malfatti S."/>
            <person name="Shin M."/>
            <person name="Vergez L."/>
            <person name="Schmutz J."/>
            <person name="Larimer F."/>
            <person name="Land M."/>
            <person name="Hauser L."/>
            <person name="Kyrpides N."/>
            <person name="Ivanova N."/>
            <person name="Ward B."/>
            <person name="Arp D."/>
            <person name="Klotz M."/>
            <person name="Stein L."/>
            <person name="O'Mullan G."/>
            <person name="Starkenburg S."/>
            <person name="Sayavedra L."/>
            <person name="Poret-Peterson A.T."/>
            <person name="Gentry M.E."/>
            <person name="Bruce D."/>
            <person name="Richardson P."/>
        </authorList>
    </citation>
    <scope>NUCLEOTIDE SEQUENCE [LARGE SCALE GENOMIC DNA]</scope>
    <source>
        <strain>DSM 10229 / NCIMB 13809 / X14</strain>
    </source>
</reference>
<proteinExistence type="inferred from homology"/>
<comment type="function">
    <text evidence="1">Catalyzes the reversible phosphorylation of UMP to UDP.</text>
</comment>
<comment type="catalytic activity">
    <reaction evidence="1">
        <text>UMP + ATP = UDP + ADP</text>
        <dbReference type="Rhea" id="RHEA:24400"/>
        <dbReference type="ChEBI" id="CHEBI:30616"/>
        <dbReference type="ChEBI" id="CHEBI:57865"/>
        <dbReference type="ChEBI" id="CHEBI:58223"/>
        <dbReference type="ChEBI" id="CHEBI:456216"/>
        <dbReference type="EC" id="2.7.4.22"/>
    </reaction>
</comment>
<comment type="activity regulation">
    <text evidence="1">Inhibited by UTP.</text>
</comment>
<comment type="pathway">
    <text evidence="1">Pyrimidine metabolism; CTP biosynthesis via de novo pathway; UDP from UMP (UMPK route): step 1/1.</text>
</comment>
<comment type="subunit">
    <text evidence="1">Homohexamer.</text>
</comment>
<comment type="subcellular location">
    <subcellularLocation>
        <location evidence="1">Cytoplasm</location>
    </subcellularLocation>
</comment>
<comment type="similarity">
    <text evidence="1">Belongs to the UMP kinase family.</text>
</comment>
<feature type="chain" id="PRO_0000323902" description="Uridylate kinase">
    <location>
        <begin position="1"/>
        <end position="238"/>
    </location>
</feature>
<feature type="binding site" evidence="1">
    <location>
        <begin position="12"/>
        <end position="15"/>
    </location>
    <ligand>
        <name>ATP</name>
        <dbReference type="ChEBI" id="CHEBI:30616"/>
    </ligand>
</feature>
<feature type="binding site" evidence="1">
    <location>
        <position position="54"/>
    </location>
    <ligand>
        <name>UMP</name>
        <dbReference type="ChEBI" id="CHEBI:57865"/>
    </ligand>
</feature>
<feature type="binding site" evidence="1">
    <location>
        <position position="55"/>
    </location>
    <ligand>
        <name>ATP</name>
        <dbReference type="ChEBI" id="CHEBI:30616"/>
    </ligand>
</feature>
<feature type="binding site" evidence="1">
    <location>
        <position position="59"/>
    </location>
    <ligand>
        <name>ATP</name>
        <dbReference type="ChEBI" id="CHEBI:30616"/>
    </ligand>
</feature>
<feature type="binding site" evidence="1">
    <location>
        <position position="74"/>
    </location>
    <ligand>
        <name>UMP</name>
        <dbReference type="ChEBI" id="CHEBI:57865"/>
    </ligand>
</feature>
<feature type="binding site" evidence="1">
    <location>
        <begin position="135"/>
        <end position="142"/>
    </location>
    <ligand>
        <name>UMP</name>
        <dbReference type="ChEBI" id="CHEBI:57865"/>
    </ligand>
</feature>
<feature type="binding site" evidence="1">
    <location>
        <position position="162"/>
    </location>
    <ligand>
        <name>ATP</name>
        <dbReference type="ChEBI" id="CHEBI:30616"/>
    </ligand>
</feature>
<feature type="binding site" evidence="1">
    <location>
        <position position="163"/>
    </location>
    <ligand>
        <name>ATP</name>
        <dbReference type="ChEBI" id="CHEBI:30616"/>
    </ligand>
</feature>
<feature type="binding site" evidence="1">
    <location>
        <position position="168"/>
    </location>
    <ligand>
        <name>ATP</name>
        <dbReference type="ChEBI" id="CHEBI:30616"/>
    </ligand>
</feature>
<feature type="binding site" evidence="1">
    <location>
        <position position="171"/>
    </location>
    <ligand>
        <name>ATP</name>
        <dbReference type="ChEBI" id="CHEBI:30616"/>
    </ligand>
</feature>
<keyword id="KW-0067">ATP-binding</keyword>
<keyword id="KW-0963">Cytoplasm</keyword>
<keyword id="KW-0418">Kinase</keyword>
<keyword id="KW-0547">Nucleotide-binding</keyword>
<keyword id="KW-0665">Pyrimidine biosynthesis</keyword>
<keyword id="KW-1185">Reference proteome</keyword>
<keyword id="KW-0808">Transferase</keyword>
<name>PYRH_NITHX</name>
<sequence length="238" mass="24868">MDEPAYRRVVVKLSGEYLAGSQPFGIDQPTVDRIAGDLASARALGTEIAVVVGGGNIFRGVEVSSRGVSRPTGDTMGMLATVMNCLALEAALERRGQSARALSAFVMPEVCELFTRNAAHKYLSEGRIVLLGGGTGNPYFTTDTTAVLRAAEIGAQAVLKATNVDGVYSSDPKKDPSATRFERLSHSQALEGGYKVMDATAFALARETSLPIIVFSIAEPGSIGAILKGTGRGTIVAS</sequence>